<gene>
    <name type="primary">ndhG</name>
</gene>
<protein>
    <recommendedName>
        <fullName>NAD(P)H-quinone oxidoreductase subunit 6, chloroplastic</fullName>
        <ecNumber>7.1.1.-</ecNumber>
    </recommendedName>
    <alternativeName>
        <fullName>NAD(P)H dehydrogenase subunit 6</fullName>
    </alternativeName>
    <alternativeName>
        <fullName>NADH-plastoquinone oxidoreductase subunit 6</fullName>
    </alternativeName>
</protein>
<dbReference type="EC" id="7.1.1.-"/>
<dbReference type="EMBL" id="EU325680">
    <property type="protein sequence ID" value="ACF08690.1"/>
    <property type="molecule type" value="Genomic_DNA"/>
</dbReference>
<dbReference type="RefSeq" id="YP_002000538.1">
    <property type="nucleotide sequence ID" value="NC_011032.1"/>
</dbReference>
<dbReference type="SMR" id="B3TNA2"/>
<dbReference type="FunCoup" id="B3TNA2">
    <property type="interactions" value="23"/>
</dbReference>
<dbReference type="STRING" id="15368.B3TNA2"/>
<dbReference type="GeneID" id="6439825"/>
<dbReference type="KEGG" id="bdi:6439825"/>
<dbReference type="InParanoid" id="B3TNA2"/>
<dbReference type="Proteomes" id="UP000008810">
    <property type="component" value="Chloroplast"/>
</dbReference>
<dbReference type="ExpressionAtlas" id="B3TNA2">
    <property type="expression patterns" value="baseline"/>
</dbReference>
<dbReference type="GO" id="GO:0009535">
    <property type="term" value="C:chloroplast thylakoid membrane"/>
    <property type="evidence" value="ECO:0007669"/>
    <property type="project" value="UniProtKB-SubCell"/>
</dbReference>
<dbReference type="GO" id="GO:0008137">
    <property type="term" value="F:NADH dehydrogenase (ubiquinone) activity"/>
    <property type="evidence" value="ECO:0007669"/>
    <property type="project" value="InterPro"/>
</dbReference>
<dbReference type="GO" id="GO:0048038">
    <property type="term" value="F:quinone binding"/>
    <property type="evidence" value="ECO:0007669"/>
    <property type="project" value="UniProtKB-KW"/>
</dbReference>
<dbReference type="FunFam" id="1.20.120.1200:FF:000002">
    <property type="entry name" value="NAD(P)H-quinone oxidoreductase subunit 6, chloroplastic"/>
    <property type="match status" value="1"/>
</dbReference>
<dbReference type="Gene3D" id="1.20.120.1200">
    <property type="entry name" value="NADH-ubiquinone/plastoquinone oxidoreductase chain 6, subunit NuoJ"/>
    <property type="match status" value="1"/>
</dbReference>
<dbReference type="InterPro" id="IPR050290">
    <property type="entry name" value="NAD(P)H-Q_Oxidoreduct_6"/>
</dbReference>
<dbReference type="InterPro" id="IPR001457">
    <property type="entry name" value="NADH_UbQ/plastoQ_OxRdtase_su6"/>
</dbReference>
<dbReference type="InterPro" id="IPR042106">
    <property type="entry name" value="Nuo/plastoQ_OxRdtase_6_NuoJ"/>
</dbReference>
<dbReference type="PANTHER" id="PTHR48479">
    <property type="entry name" value="NAD(P)H-QUINONE OXIDOREDUCTASE SUBUNIT 6, CHLOROPLASTIC"/>
    <property type="match status" value="1"/>
</dbReference>
<dbReference type="PANTHER" id="PTHR48479:SF1">
    <property type="entry name" value="NAD(P)H-QUINONE OXIDOREDUCTASE SUBUNIT 6, CHLOROPLASTIC"/>
    <property type="match status" value="1"/>
</dbReference>
<dbReference type="Pfam" id="PF00499">
    <property type="entry name" value="Oxidored_q3"/>
    <property type="match status" value="1"/>
</dbReference>
<proteinExistence type="inferred from homology"/>
<keyword id="KW-0150">Chloroplast</keyword>
<keyword id="KW-0472">Membrane</keyword>
<keyword id="KW-0520">NAD</keyword>
<keyword id="KW-0521">NADP</keyword>
<keyword id="KW-0934">Plastid</keyword>
<keyword id="KW-0618">Plastoquinone</keyword>
<keyword id="KW-0874">Quinone</keyword>
<keyword id="KW-1185">Reference proteome</keyword>
<keyword id="KW-0793">Thylakoid</keyword>
<keyword id="KW-1278">Translocase</keyword>
<keyword id="KW-0812">Transmembrane</keyword>
<keyword id="KW-1133">Transmembrane helix</keyword>
<keyword id="KW-0813">Transport</keyword>
<reference key="1">
    <citation type="journal article" date="2008" name="BMC Res. Notes">
        <title>The complete chloroplast genome sequence of Brachypodium distachyon: sequence comparison and phylogenetic analysis of eight grass plastomes.</title>
        <authorList>
            <person name="Bortiri E."/>
            <person name="Coleman-Derr D."/>
            <person name="Lazo G.R."/>
            <person name="Anderson O.D."/>
            <person name="Gu Y.Q."/>
        </authorList>
    </citation>
    <scope>NUCLEOTIDE SEQUENCE [LARGE SCALE GENOMIC DNA]</scope>
    <source>
        <strain>cv. Bd21</strain>
    </source>
</reference>
<organism>
    <name type="scientific">Brachypodium distachyon</name>
    <name type="common">Purple false brome</name>
    <name type="synonym">Trachynia distachya</name>
    <dbReference type="NCBI Taxonomy" id="15368"/>
    <lineage>
        <taxon>Eukaryota</taxon>
        <taxon>Viridiplantae</taxon>
        <taxon>Streptophyta</taxon>
        <taxon>Embryophyta</taxon>
        <taxon>Tracheophyta</taxon>
        <taxon>Spermatophyta</taxon>
        <taxon>Magnoliopsida</taxon>
        <taxon>Liliopsida</taxon>
        <taxon>Poales</taxon>
        <taxon>Poaceae</taxon>
        <taxon>BOP clade</taxon>
        <taxon>Pooideae</taxon>
        <taxon>Stipodae</taxon>
        <taxon>Brachypodieae</taxon>
        <taxon>Brachypodium</taxon>
    </lineage>
</organism>
<accession>B3TNA2</accession>
<geneLocation type="chloroplast"/>
<sequence length="176" mass="19409">MDLPGPIHEILVLFLGFVLLLGGLGVVLLTNPIYSAFSLGLVLVCISLFYFLLNSYFVAVAQLLIYVGAINVLIIFAVMFVNGSEWSKDKNSWTIGDGFTSLVCITIVFSLMTTIPDTSWYGILWTTRSNQIVEQGLINNVQQIGIHLATDFYLPFELISIILLVSLIGAITMARQ</sequence>
<evidence type="ECO:0000250" key="1"/>
<evidence type="ECO:0000255" key="2"/>
<evidence type="ECO:0000305" key="3"/>
<name>NU6C_BRADI</name>
<feature type="chain" id="PRO_0000360231" description="NAD(P)H-quinone oxidoreductase subunit 6, chloroplastic">
    <location>
        <begin position="1"/>
        <end position="176"/>
    </location>
</feature>
<feature type="transmembrane region" description="Helical" evidence="2">
    <location>
        <begin position="10"/>
        <end position="30"/>
    </location>
</feature>
<feature type="transmembrane region" description="Helical" evidence="2">
    <location>
        <begin position="33"/>
        <end position="53"/>
    </location>
</feature>
<feature type="transmembrane region" description="Helical" evidence="2">
    <location>
        <begin position="60"/>
        <end position="80"/>
    </location>
</feature>
<feature type="transmembrane region" description="Helical" evidence="2">
    <location>
        <begin position="95"/>
        <end position="115"/>
    </location>
</feature>
<feature type="transmembrane region" description="Helical" evidence="2">
    <location>
        <begin position="152"/>
        <end position="172"/>
    </location>
</feature>
<comment type="function">
    <text evidence="1">NDH shuttles electrons from NAD(P)H:plastoquinone, via FMN and iron-sulfur (Fe-S) centers, to quinones in the photosynthetic chain and possibly in a chloroplast respiratory chain. The immediate electron acceptor for the enzyme in this species is believed to be plastoquinone. Couples the redox reaction to proton translocation, and thus conserves the redox energy in a proton gradient (By similarity).</text>
</comment>
<comment type="catalytic activity">
    <reaction>
        <text>a plastoquinone + NADH + (n+1) H(+)(in) = a plastoquinol + NAD(+) + n H(+)(out)</text>
        <dbReference type="Rhea" id="RHEA:42608"/>
        <dbReference type="Rhea" id="RHEA-COMP:9561"/>
        <dbReference type="Rhea" id="RHEA-COMP:9562"/>
        <dbReference type="ChEBI" id="CHEBI:15378"/>
        <dbReference type="ChEBI" id="CHEBI:17757"/>
        <dbReference type="ChEBI" id="CHEBI:57540"/>
        <dbReference type="ChEBI" id="CHEBI:57945"/>
        <dbReference type="ChEBI" id="CHEBI:62192"/>
    </reaction>
</comment>
<comment type="catalytic activity">
    <reaction>
        <text>a plastoquinone + NADPH + (n+1) H(+)(in) = a plastoquinol + NADP(+) + n H(+)(out)</text>
        <dbReference type="Rhea" id="RHEA:42612"/>
        <dbReference type="Rhea" id="RHEA-COMP:9561"/>
        <dbReference type="Rhea" id="RHEA-COMP:9562"/>
        <dbReference type="ChEBI" id="CHEBI:15378"/>
        <dbReference type="ChEBI" id="CHEBI:17757"/>
        <dbReference type="ChEBI" id="CHEBI:57783"/>
        <dbReference type="ChEBI" id="CHEBI:58349"/>
        <dbReference type="ChEBI" id="CHEBI:62192"/>
    </reaction>
</comment>
<comment type="subunit">
    <text evidence="1">NDH is composed of at least 16 different subunits, 5 of which are encoded in the nucleus.</text>
</comment>
<comment type="subcellular location">
    <subcellularLocation>
        <location evidence="1">Plastid</location>
        <location evidence="1">Chloroplast thylakoid membrane</location>
        <topology evidence="1">Multi-pass membrane protein</topology>
    </subcellularLocation>
</comment>
<comment type="similarity">
    <text evidence="3">Belongs to the complex I subunit 6 family.</text>
</comment>